<evidence type="ECO:0000255" key="1">
    <source>
        <dbReference type="HAMAP-Rule" id="MF_01398"/>
    </source>
</evidence>
<keyword id="KW-0066">ATP synthesis</keyword>
<keyword id="KW-0138">CF(0)</keyword>
<keyword id="KW-0150">Chloroplast</keyword>
<keyword id="KW-0375">Hydrogen ion transport</keyword>
<keyword id="KW-0406">Ion transport</keyword>
<keyword id="KW-0472">Membrane</keyword>
<keyword id="KW-0934">Plastid</keyword>
<keyword id="KW-0793">Thylakoid</keyword>
<keyword id="KW-0812">Transmembrane</keyword>
<keyword id="KW-1133">Transmembrane helix</keyword>
<keyword id="KW-0813">Transport</keyword>
<gene>
    <name evidence="1" type="primary">atpF</name>
</gene>
<protein>
    <recommendedName>
        <fullName evidence="1">ATP synthase subunit b, chloroplastic</fullName>
    </recommendedName>
    <alternativeName>
        <fullName evidence="1">ATP synthase F(0) sector subunit b</fullName>
    </alternativeName>
    <alternativeName>
        <fullName evidence="1">ATPase subunit I</fullName>
    </alternativeName>
</protein>
<name>ATPF_OENAR</name>
<geneLocation type="chloroplast"/>
<proteinExistence type="inferred from homology"/>
<sequence>MKNVTDSFVSLVHWPSAGSFGFNTDILATNPINLSVVLGVLIFFGKGVLSDLLDNRKQRILNTIRNSEELREGAIEQLEKARARLQDVQIEAEGYRAYGYFGIDEQRHESINSTYKTLEQLENNKNESIHFEQQRAINQVRQQIFQQALQGALGTLNSCLNNELHLRTISANIVLFGSMKELTD</sequence>
<accession>B0Z4N1</accession>
<organism>
    <name type="scientific">Oenothera argillicola</name>
    <name type="common">Appalachian evening primrose</name>
    <dbReference type="NCBI Taxonomy" id="3940"/>
    <lineage>
        <taxon>Eukaryota</taxon>
        <taxon>Viridiplantae</taxon>
        <taxon>Streptophyta</taxon>
        <taxon>Embryophyta</taxon>
        <taxon>Tracheophyta</taxon>
        <taxon>Spermatophyta</taxon>
        <taxon>Magnoliopsida</taxon>
        <taxon>eudicotyledons</taxon>
        <taxon>Gunneridae</taxon>
        <taxon>Pentapetalae</taxon>
        <taxon>rosids</taxon>
        <taxon>malvids</taxon>
        <taxon>Myrtales</taxon>
        <taxon>Onagraceae</taxon>
        <taxon>Onagroideae</taxon>
        <taxon>Onagreae</taxon>
        <taxon>Oenothera</taxon>
    </lineage>
</organism>
<reference key="1">
    <citation type="journal article" date="2008" name="Nucleic Acids Res.">
        <title>The complete nucleotide sequences of the five genetically distinct plastid genomes of Oenothera, subsection Oenothera: I. Sequence evaluation and plastome evolution.</title>
        <authorList>
            <person name="Greiner S."/>
            <person name="Wang X."/>
            <person name="Rauwolf U."/>
            <person name="Silber M.V."/>
            <person name="Mayer K."/>
            <person name="Meurer J."/>
            <person name="Haberer G."/>
            <person name="Herrmann R.G."/>
        </authorList>
    </citation>
    <scope>NUCLEOTIDE SEQUENCE [LARGE SCALE GENOMIC DNA]</scope>
    <source>
        <strain>cv. Douthat 1</strain>
    </source>
</reference>
<comment type="function">
    <text evidence="1">F(1)F(0) ATP synthase produces ATP from ADP in the presence of a proton or sodium gradient. F-type ATPases consist of two structural domains, F(1) containing the extramembraneous catalytic core and F(0) containing the membrane proton channel, linked together by a central stalk and a peripheral stalk. During catalysis, ATP synthesis in the catalytic domain of F(1) is coupled via a rotary mechanism of the central stalk subunits to proton translocation.</text>
</comment>
<comment type="function">
    <text evidence="1">Component of the F(0) channel, it forms part of the peripheral stalk, linking F(1) to F(0).</text>
</comment>
<comment type="subunit">
    <text evidence="1">F-type ATPases have 2 components, F(1) - the catalytic core - and F(0) - the membrane proton channel. F(1) has five subunits: alpha(3), beta(3), gamma(1), delta(1), epsilon(1). F(0) has four main subunits: a(1), b(1), b'(1) and c(10-14). The alpha and beta chains form an alternating ring which encloses part of the gamma chain. F(1) is attached to F(0) by a central stalk formed by the gamma and epsilon chains, while a peripheral stalk is formed by the delta, b and b' chains.</text>
</comment>
<comment type="subcellular location">
    <subcellularLocation>
        <location evidence="1">Plastid</location>
        <location evidence="1">Chloroplast thylakoid membrane</location>
        <topology evidence="1">Single-pass membrane protein</topology>
    </subcellularLocation>
</comment>
<comment type="miscellaneous">
    <text>In plastids the F-type ATPase is also known as CF(1)CF(0).</text>
</comment>
<comment type="similarity">
    <text evidence="1">Belongs to the ATPase B chain family.</text>
</comment>
<feature type="chain" id="PRO_0000368959" description="ATP synthase subunit b, chloroplastic">
    <location>
        <begin position="1"/>
        <end position="184"/>
    </location>
</feature>
<feature type="transmembrane region" description="Helical" evidence="1">
    <location>
        <begin position="27"/>
        <end position="49"/>
    </location>
</feature>
<dbReference type="EMBL" id="EU262887">
    <property type="protein sequence ID" value="ABW98709.1"/>
    <property type="molecule type" value="Genomic_DNA"/>
</dbReference>
<dbReference type="RefSeq" id="YP_001687142.1">
    <property type="nucleotide sequence ID" value="NC_010358.2"/>
</dbReference>
<dbReference type="SMR" id="B0Z4N1"/>
<dbReference type="GeneID" id="5951853"/>
<dbReference type="GO" id="GO:0009535">
    <property type="term" value="C:chloroplast thylakoid membrane"/>
    <property type="evidence" value="ECO:0007669"/>
    <property type="project" value="UniProtKB-SubCell"/>
</dbReference>
<dbReference type="GO" id="GO:0045259">
    <property type="term" value="C:proton-transporting ATP synthase complex"/>
    <property type="evidence" value="ECO:0007669"/>
    <property type="project" value="UniProtKB-KW"/>
</dbReference>
<dbReference type="GO" id="GO:0046933">
    <property type="term" value="F:proton-transporting ATP synthase activity, rotational mechanism"/>
    <property type="evidence" value="ECO:0007669"/>
    <property type="project" value="UniProtKB-UniRule"/>
</dbReference>
<dbReference type="CDD" id="cd06503">
    <property type="entry name" value="ATP-synt_Fo_b"/>
    <property type="match status" value="1"/>
</dbReference>
<dbReference type="HAMAP" id="MF_01398">
    <property type="entry name" value="ATP_synth_b_bprime"/>
    <property type="match status" value="1"/>
</dbReference>
<dbReference type="InterPro" id="IPR002146">
    <property type="entry name" value="ATP_synth_b/b'su_bac/chlpt"/>
</dbReference>
<dbReference type="PANTHER" id="PTHR34264">
    <property type="entry name" value="ATP SYNTHASE SUBUNIT B, CHLOROPLASTIC"/>
    <property type="match status" value="1"/>
</dbReference>
<dbReference type="PANTHER" id="PTHR34264:SF3">
    <property type="entry name" value="ATP SYNTHASE SUBUNIT B, CHLOROPLASTIC"/>
    <property type="match status" value="1"/>
</dbReference>
<dbReference type="Pfam" id="PF00430">
    <property type="entry name" value="ATP-synt_B"/>
    <property type="match status" value="1"/>
</dbReference>